<comment type="function">
    <text evidence="1">Catalyzes the cleavage of 5-oxoproline to form L-glutamate coupled to the hydrolysis of ATP to ADP and inorganic phosphate.</text>
</comment>
<comment type="catalytic activity">
    <reaction evidence="1">
        <text>5-oxo-L-proline + ATP + 2 H2O = L-glutamate + ADP + phosphate + H(+)</text>
        <dbReference type="Rhea" id="RHEA:10348"/>
        <dbReference type="ChEBI" id="CHEBI:15377"/>
        <dbReference type="ChEBI" id="CHEBI:15378"/>
        <dbReference type="ChEBI" id="CHEBI:29985"/>
        <dbReference type="ChEBI" id="CHEBI:30616"/>
        <dbReference type="ChEBI" id="CHEBI:43474"/>
        <dbReference type="ChEBI" id="CHEBI:58402"/>
        <dbReference type="ChEBI" id="CHEBI:456216"/>
        <dbReference type="EC" id="3.5.2.9"/>
    </reaction>
</comment>
<comment type="subunit">
    <text evidence="1">Forms a complex composed of PxpA, PxpB and PxpC.</text>
</comment>
<comment type="similarity">
    <text evidence="1">Belongs to the LamB/PxpA family.</text>
</comment>
<sequence>MRIDLNADLGEGFGAWTMGEDEALMQLISSANVACGFHAGDPLIMDSTVRRAKALGIDLGAHVGFPDLQGFGRRRMNIELKELCAIVVYQLGALAGIATAAGYRVTHMSFHGALGNMAAADAELAGPLVKAVARFDPQMIISSSSSEAIEQAAQACNLRVATTFLADRAYDENCLLVPRGIAGAVVKDPEQVRARVAQLLQDGTVTTLSGKRVAVNAQSILLHGDTPGAVELARSIRHSIEEQGGVITPVSQLLGS</sequence>
<proteinExistence type="inferred from homology"/>
<evidence type="ECO:0000255" key="1">
    <source>
        <dbReference type="HAMAP-Rule" id="MF_00691"/>
    </source>
</evidence>
<reference key="1">
    <citation type="journal article" date="2003" name="Proc. Natl. Acad. Sci. U.S.A.">
        <title>The complete genome sequence of the Arabidopsis and tomato pathogen Pseudomonas syringae pv. tomato DC3000.</title>
        <authorList>
            <person name="Buell C.R."/>
            <person name="Joardar V."/>
            <person name="Lindeberg M."/>
            <person name="Selengut J."/>
            <person name="Paulsen I.T."/>
            <person name="Gwinn M.L."/>
            <person name="Dodson R.J."/>
            <person name="DeBoy R.T."/>
            <person name="Durkin A.S."/>
            <person name="Kolonay J.F."/>
            <person name="Madupu R."/>
            <person name="Daugherty S.C."/>
            <person name="Brinkac L.M."/>
            <person name="Beanan M.J."/>
            <person name="Haft D.H."/>
            <person name="Nelson W.C."/>
            <person name="Davidsen T.M."/>
            <person name="Zafar N."/>
            <person name="Zhou L."/>
            <person name="Liu J."/>
            <person name="Yuan Q."/>
            <person name="Khouri H.M."/>
            <person name="Fedorova N.B."/>
            <person name="Tran B."/>
            <person name="Russell D."/>
            <person name="Berry K.J."/>
            <person name="Utterback T.R."/>
            <person name="Van Aken S.E."/>
            <person name="Feldblyum T.V."/>
            <person name="D'Ascenzo M."/>
            <person name="Deng W.-L."/>
            <person name="Ramos A.R."/>
            <person name="Alfano J.R."/>
            <person name="Cartinhour S."/>
            <person name="Chatterjee A.K."/>
            <person name="Delaney T.P."/>
            <person name="Lazarowitz S.G."/>
            <person name="Martin G.B."/>
            <person name="Schneider D.J."/>
            <person name="Tang X."/>
            <person name="Bender C.L."/>
            <person name="White O."/>
            <person name="Fraser C.M."/>
            <person name="Collmer A."/>
        </authorList>
    </citation>
    <scope>NUCLEOTIDE SEQUENCE [LARGE SCALE GENOMIC DNA]</scope>
    <source>
        <strain>ATCC BAA-871 / DC3000</strain>
    </source>
</reference>
<keyword id="KW-0067">ATP-binding</keyword>
<keyword id="KW-0378">Hydrolase</keyword>
<keyword id="KW-0547">Nucleotide-binding</keyword>
<keyword id="KW-1185">Reference proteome</keyword>
<accession>Q881H6</accession>
<dbReference type="EC" id="3.5.2.9" evidence="1"/>
<dbReference type="EMBL" id="AE016853">
    <property type="protein sequence ID" value="AAO56410.1"/>
    <property type="molecule type" value="Genomic_DNA"/>
</dbReference>
<dbReference type="RefSeq" id="NP_792715.1">
    <property type="nucleotide sequence ID" value="NC_004578.1"/>
</dbReference>
<dbReference type="RefSeq" id="WP_011104272.1">
    <property type="nucleotide sequence ID" value="NC_004578.1"/>
</dbReference>
<dbReference type="SMR" id="Q881H6"/>
<dbReference type="STRING" id="223283.PSPTO_2917"/>
<dbReference type="GeneID" id="1184571"/>
<dbReference type="KEGG" id="pst:PSPTO_2917"/>
<dbReference type="PATRIC" id="fig|223283.9.peg.2976"/>
<dbReference type="eggNOG" id="COG1540">
    <property type="taxonomic scope" value="Bacteria"/>
</dbReference>
<dbReference type="HOGENOM" id="CLU_069535_0_0_6"/>
<dbReference type="OrthoDB" id="9773478at2"/>
<dbReference type="PhylomeDB" id="Q881H6"/>
<dbReference type="Proteomes" id="UP000002515">
    <property type="component" value="Chromosome"/>
</dbReference>
<dbReference type="GO" id="GO:0017168">
    <property type="term" value="F:5-oxoprolinase (ATP-hydrolyzing) activity"/>
    <property type="evidence" value="ECO:0007669"/>
    <property type="project" value="UniProtKB-UniRule"/>
</dbReference>
<dbReference type="GO" id="GO:0005524">
    <property type="term" value="F:ATP binding"/>
    <property type="evidence" value="ECO:0007669"/>
    <property type="project" value="UniProtKB-UniRule"/>
</dbReference>
<dbReference type="GO" id="GO:0005975">
    <property type="term" value="P:carbohydrate metabolic process"/>
    <property type="evidence" value="ECO:0007669"/>
    <property type="project" value="InterPro"/>
</dbReference>
<dbReference type="CDD" id="cd10787">
    <property type="entry name" value="LamB_YcsF_like"/>
    <property type="match status" value="1"/>
</dbReference>
<dbReference type="Gene3D" id="3.20.20.370">
    <property type="entry name" value="Glycoside hydrolase/deacetylase"/>
    <property type="match status" value="1"/>
</dbReference>
<dbReference type="HAMAP" id="MF_00691">
    <property type="entry name" value="PxpA"/>
    <property type="match status" value="1"/>
</dbReference>
<dbReference type="InterPro" id="IPR011330">
    <property type="entry name" value="Glyco_hydro/deAcase_b/a-brl"/>
</dbReference>
<dbReference type="InterPro" id="IPR005501">
    <property type="entry name" value="LamB/YcsF/PxpA-like"/>
</dbReference>
<dbReference type="NCBIfam" id="NF003814">
    <property type="entry name" value="PRK05406.1-3"/>
    <property type="match status" value="1"/>
</dbReference>
<dbReference type="NCBIfam" id="NF003816">
    <property type="entry name" value="PRK05406.1-5"/>
    <property type="match status" value="1"/>
</dbReference>
<dbReference type="PANTHER" id="PTHR30292:SF0">
    <property type="entry name" value="5-OXOPROLINASE SUBUNIT A"/>
    <property type="match status" value="1"/>
</dbReference>
<dbReference type="PANTHER" id="PTHR30292">
    <property type="entry name" value="UNCHARACTERIZED PROTEIN YBGL-RELATED"/>
    <property type="match status" value="1"/>
</dbReference>
<dbReference type="Pfam" id="PF03746">
    <property type="entry name" value="LamB_YcsF"/>
    <property type="match status" value="1"/>
</dbReference>
<dbReference type="SUPFAM" id="SSF88713">
    <property type="entry name" value="Glycoside hydrolase/deacetylase"/>
    <property type="match status" value="1"/>
</dbReference>
<organism>
    <name type="scientific">Pseudomonas syringae pv. tomato (strain ATCC BAA-871 / DC3000)</name>
    <dbReference type="NCBI Taxonomy" id="223283"/>
    <lineage>
        <taxon>Bacteria</taxon>
        <taxon>Pseudomonadati</taxon>
        <taxon>Pseudomonadota</taxon>
        <taxon>Gammaproteobacteria</taxon>
        <taxon>Pseudomonadales</taxon>
        <taxon>Pseudomonadaceae</taxon>
        <taxon>Pseudomonas</taxon>
    </lineage>
</organism>
<feature type="chain" id="PRO_0000185031" description="5-oxoprolinase subunit A 1">
    <location>
        <begin position="1"/>
        <end position="256"/>
    </location>
</feature>
<protein>
    <recommendedName>
        <fullName evidence="1">5-oxoprolinase subunit A 1</fullName>
        <shortName evidence="1">5-OPase subunit A 1</shortName>
        <ecNumber evidence="1">3.5.2.9</ecNumber>
    </recommendedName>
    <alternativeName>
        <fullName evidence="1">5-oxoprolinase (ATP-hydrolyzing) subunit A 1</fullName>
    </alternativeName>
</protein>
<name>PXPA1_PSESM</name>
<gene>
    <name evidence="1" type="primary">pxpA1</name>
    <name type="ordered locus">PSPTO_2917</name>
</gene>